<reference key="1">
    <citation type="journal article" date="2003" name="Biochim. Biophys. Acta">
        <title>Characterization of the major allergens purified from the venom of the paper wasp Polistes gallicus.</title>
        <authorList>
            <person name="Pantera B."/>
            <person name="Hoffman D.R."/>
            <person name="Carresi L."/>
            <person name="Cappugi G."/>
            <person name="Turillazzi S."/>
            <person name="Manao G."/>
            <person name="Severino M."/>
            <person name="Spadolini I."/>
            <person name="Orsomando G."/>
            <person name="Moneti G."/>
            <person name="Pazzagli L."/>
        </authorList>
    </citation>
    <scope>PROTEIN SEQUENCE</scope>
    <scope>SUBCELLULAR LOCATION</scope>
    <source>
        <tissue>Venom</tissue>
    </source>
</reference>
<sequence>NDYCKIKCSSGVHTVCQYGESTKPSKNCAGKVIKSVGPTEEEKKLIVEEHNRFRQKVAQGLETRGNPGPQPAASNMNNLVWNDEQAKIAQVWASQCQILVHDKCRNTEKYQVGQNIAYAGSSNHFPSVTKLIQLWENEVKDFNYNTGITNKNFGKVGHYTQMVWGNTKEVGCGSLKYVEKNMKIHYLICNYGPAGNYLGQPIYTKK</sequence>
<comment type="subcellular location">
    <subcellularLocation>
        <location evidence="2">Secreted</location>
    </subcellularLocation>
</comment>
<comment type="tissue specificity">
    <text>Expressed by the venom gland.</text>
</comment>
<comment type="allergen">
    <text>Causes an allergic reaction in human.</text>
</comment>
<comment type="similarity">
    <text evidence="3">Belongs to the CRISP family. Venom allergen 5-like subfamily.</text>
</comment>
<protein>
    <recommendedName>
        <fullName>Venom allergen 5</fullName>
    </recommendedName>
    <alternativeName>
        <fullName>Antigen 5</fullName>
        <shortName>Ag5</shortName>
    </alternativeName>
    <alternativeName>
        <fullName>Cysteine-rich venom protein</fullName>
        <shortName>CRVP</shortName>
    </alternativeName>
    <allergenName>Pol g 5</allergenName>
</protein>
<name>VA5_POLGA</name>
<proteinExistence type="evidence at protein level"/>
<evidence type="ECO:0000250" key="1"/>
<evidence type="ECO:0000269" key="2">
    <source>
    </source>
</evidence>
<evidence type="ECO:0000305" key="3"/>
<organism evidence="3">
    <name type="scientific">Polistes gallicus</name>
    <name type="common">Paper wasp</name>
    <dbReference type="NCBI Taxonomy" id="34730"/>
    <lineage>
        <taxon>Eukaryota</taxon>
        <taxon>Metazoa</taxon>
        <taxon>Ecdysozoa</taxon>
        <taxon>Arthropoda</taxon>
        <taxon>Hexapoda</taxon>
        <taxon>Insecta</taxon>
        <taxon>Pterygota</taxon>
        <taxon>Neoptera</taxon>
        <taxon>Endopterygota</taxon>
        <taxon>Hymenoptera</taxon>
        <taxon>Apocrita</taxon>
        <taxon>Aculeata</taxon>
        <taxon>Vespoidea</taxon>
        <taxon>Vespidae</taxon>
        <taxon>Polistinae</taxon>
        <taxon>Polistini</taxon>
        <taxon>Polistes</taxon>
    </lineage>
</organism>
<dbReference type="SMR" id="P83377"/>
<dbReference type="Allergome" id="3444">
    <property type="allergen name" value="Pol g 5.0101"/>
</dbReference>
<dbReference type="Allergome" id="708">
    <property type="allergen name" value="Pol g 5"/>
</dbReference>
<dbReference type="GO" id="GO:0005576">
    <property type="term" value="C:extracellular region"/>
    <property type="evidence" value="ECO:0007669"/>
    <property type="project" value="UniProtKB-SubCell"/>
</dbReference>
<dbReference type="CDD" id="cd05380">
    <property type="entry name" value="CAP_euk"/>
    <property type="match status" value="1"/>
</dbReference>
<dbReference type="Gene3D" id="3.40.33.10">
    <property type="entry name" value="CAP"/>
    <property type="match status" value="1"/>
</dbReference>
<dbReference type="InterPro" id="IPR018244">
    <property type="entry name" value="Allrgn_V5/Tpx1_CS"/>
</dbReference>
<dbReference type="InterPro" id="IPR014044">
    <property type="entry name" value="CAP_dom"/>
</dbReference>
<dbReference type="InterPro" id="IPR035940">
    <property type="entry name" value="CAP_sf"/>
</dbReference>
<dbReference type="InterPro" id="IPR001283">
    <property type="entry name" value="CRISP-related"/>
</dbReference>
<dbReference type="InterPro" id="IPR002413">
    <property type="entry name" value="V5_allergen-like"/>
</dbReference>
<dbReference type="PANTHER" id="PTHR10334">
    <property type="entry name" value="CYSTEINE-RICH SECRETORY PROTEIN-RELATED"/>
    <property type="match status" value="1"/>
</dbReference>
<dbReference type="Pfam" id="PF00188">
    <property type="entry name" value="CAP"/>
    <property type="match status" value="1"/>
</dbReference>
<dbReference type="PRINTS" id="PR00838">
    <property type="entry name" value="V5ALLERGEN"/>
</dbReference>
<dbReference type="PRINTS" id="PR00837">
    <property type="entry name" value="V5TPXLIKE"/>
</dbReference>
<dbReference type="SMART" id="SM00198">
    <property type="entry name" value="SCP"/>
    <property type="match status" value="1"/>
</dbReference>
<dbReference type="SUPFAM" id="SSF55797">
    <property type="entry name" value="PR-1-like"/>
    <property type="match status" value="1"/>
</dbReference>
<dbReference type="PROSITE" id="PS01009">
    <property type="entry name" value="CRISP_1"/>
    <property type="match status" value="1"/>
</dbReference>
<dbReference type="PROSITE" id="PS01010">
    <property type="entry name" value="CRISP_2"/>
    <property type="match status" value="1"/>
</dbReference>
<keyword id="KW-0020">Allergen</keyword>
<keyword id="KW-0903">Direct protein sequencing</keyword>
<keyword id="KW-1015">Disulfide bond</keyword>
<keyword id="KW-0964">Secreted</keyword>
<feature type="chain" id="PRO_0000211537" description="Venom allergen 5">
    <location>
        <begin position="1"/>
        <end position="206"/>
    </location>
</feature>
<feature type="domain" description="SCP">
    <location>
        <begin position="48"/>
        <end position="191"/>
    </location>
</feature>
<feature type="disulfide bond" evidence="1">
    <location>
        <begin position="4"/>
        <end position="16"/>
    </location>
</feature>
<feature type="disulfide bond" evidence="1">
    <location>
        <begin position="8"/>
        <end position="104"/>
    </location>
</feature>
<feature type="disulfide bond" evidence="1">
    <location>
        <begin position="28"/>
        <end position="96"/>
    </location>
</feature>
<feature type="disulfide bond" evidence="1">
    <location>
        <begin position="172"/>
        <end position="189"/>
    </location>
</feature>
<accession>P83377</accession>